<keyword id="KW-0067">ATP-binding</keyword>
<keyword id="KW-0963">Cytoplasm</keyword>
<keyword id="KW-1015">Disulfide bond</keyword>
<keyword id="KW-0547">Nucleotide-binding</keyword>
<keyword id="KW-0676">Redox-active center</keyword>
<keyword id="KW-1185">Reference proteome</keyword>
<keyword id="KW-0694">RNA-binding</keyword>
<keyword id="KW-0784">Thiamine biosynthesis</keyword>
<keyword id="KW-0808">Transferase</keyword>
<keyword id="KW-0820">tRNA-binding</keyword>
<protein>
    <recommendedName>
        <fullName evidence="1">tRNA sulfurtransferase</fullName>
        <ecNumber evidence="1">2.8.1.4</ecNumber>
    </recommendedName>
    <alternativeName>
        <fullName evidence="1">Sulfur carrier protein ThiS sulfurtransferase</fullName>
    </alternativeName>
    <alternativeName>
        <fullName evidence="1">Thiamine biosynthesis protein ThiI</fullName>
    </alternativeName>
    <alternativeName>
        <fullName evidence="1">tRNA 4-thiouridine synthase</fullName>
    </alternativeName>
</protein>
<evidence type="ECO:0000255" key="1">
    <source>
        <dbReference type="HAMAP-Rule" id="MF_00021"/>
    </source>
</evidence>
<accession>Q493G5</accession>
<gene>
    <name evidence="1" type="primary">thiI</name>
    <name type="ordered locus">BPEN_246</name>
</gene>
<organism>
    <name type="scientific">Blochmanniella pennsylvanica (strain BPEN)</name>
    <dbReference type="NCBI Taxonomy" id="291272"/>
    <lineage>
        <taxon>Bacteria</taxon>
        <taxon>Pseudomonadati</taxon>
        <taxon>Pseudomonadota</taxon>
        <taxon>Gammaproteobacteria</taxon>
        <taxon>Enterobacterales</taxon>
        <taxon>Enterobacteriaceae</taxon>
        <taxon>ant endosymbionts</taxon>
        <taxon>Candidatus Blochmanniella</taxon>
    </lineage>
</organism>
<comment type="function">
    <text evidence="1">Catalyzes the ATP-dependent transfer of a sulfur to tRNA to produce 4-thiouridine in position 8 of tRNAs, which functions as a near-UV photosensor. Also catalyzes the transfer of sulfur to the sulfur carrier protein ThiS, forming ThiS-thiocarboxylate. This is a step in the synthesis of thiazole, in the thiamine biosynthesis pathway. The sulfur is donated as persulfide by IscS.</text>
</comment>
<comment type="catalytic activity">
    <reaction evidence="1">
        <text>[ThiI sulfur-carrier protein]-S-sulfanyl-L-cysteine + a uridine in tRNA + 2 reduced [2Fe-2S]-[ferredoxin] + ATP + H(+) = [ThiI sulfur-carrier protein]-L-cysteine + a 4-thiouridine in tRNA + 2 oxidized [2Fe-2S]-[ferredoxin] + AMP + diphosphate</text>
        <dbReference type="Rhea" id="RHEA:24176"/>
        <dbReference type="Rhea" id="RHEA-COMP:10000"/>
        <dbReference type="Rhea" id="RHEA-COMP:10001"/>
        <dbReference type="Rhea" id="RHEA-COMP:13337"/>
        <dbReference type="Rhea" id="RHEA-COMP:13338"/>
        <dbReference type="Rhea" id="RHEA-COMP:13339"/>
        <dbReference type="Rhea" id="RHEA-COMP:13340"/>
        <dbReference type="ChEBI" id="CHEBI:15378"/>
        <dbReference type="ChEBI" id="CHEBI:29950"/>
        <dbReference type="ChEBI" id="CHEBI:30616"/>
        <dbReference type="ChEBI" id="CHEBI:33019"/>
        <dbReference type="ChEBI" id="CHEBI:33737"/>
        <dbReference type="ChEBI" id="CHEBI:33738"/>
        <dbReference type="ChEBI" id="CHEBI:61963"/>
        <dbReference type="ChEBI" id="CHEBI:65315"/>
        <dbReference type="ChEBI" id="CHEBI:136798"/>
        <dbReference type="ChEBI" id="CHEBI:456215"/>
        <dbReference type="EC" id="2.8.1.4"/>
    </reaction>
</comment>
<comment type="catalytic activity">
    <reaction evidence="1">
        <text>[ThiS sulfur-carrier protein]-C-terminal Gly-Gly-AMP + S-sulfanyl-L-cysteinyl-[cysteine desulfurase] + AH2 = [ThiS sulfur-carrier protein]-C-terminal-Gly-aminoethanethioate + L-cysteinyl-[cysteine desulfurase] + A + AMP + 2 H(+)</text>
        <dbReference type="Rhea" id="RHEA:43340"/>
        <dbReference type="Rhea" id="RHEA-COMP:12157"/>
        <dbReference type="Rhea" id="RHEA-COMP:12158"/>
        <dbReference type="Rhea" id="RHEA-COMP:12910"/>
        <dbReference type="Rhea" id="RHEA-COMP:19908"/>
        <dbReference type="ChEBI" id="CHEBI:13193"/>
        <dbReference type="ChEBI" id="CHEBI:15378"/>
        <dbReference type="ChEBI" id="CHEBI:17499"/>
        <dbReference type="ChEBI" id="CHEBI:29950"/>
        <dbReference type="ChEBI" id="CHEBI:61963"/>
        <dbReference type="ChEBI" id="CHEBI:90618"/>
        <dbReference type="ChEBI" id="CHEBI:232372"/>
        <dbReference type="ChEBI" id="CHEBI:456215"/>
    </reaction>
</comment>
<comment type="pathway">
    <text evidence="1">Cofactor biosynthesis; thiamine diphosphate biosynthesis.</text>
</comment>
<comment type="subcellular location">
    <subcellularLocation>
        <location evidence="1">Cytoplasm</location>
    </subcellularLocation>
</comment>
<comment type="similarity">
    <text evidence="1">Belongs to the ThiI family.</text>
</comment>
<name>THII_BLOPB</name>
<feature type="chain" id="PRO_1000074210" description="tRNA sulfurtransferase">
    <location>
        <begin position="1"/>
        <end position="486"/>
    </location>
</feature>
<feature type="domain" description="THUMP" evidence="1">
    <location>
        <begin position="60"/>
        <end position="166"/>
    </location>
</feature>
<feature type="domain" description="Rhodanese" evidence="1">
    <location>
        <begin position="406"/>
        <end position="484"/>
    </location>
</feature>
<feature type="active site" description="Cysteine persulfide intermediate" evidence="1">
    <location>
        <position position="458"/>
    </location>
</feature>
<feature type="binding site" evidence="1">
    <location>
        <begin position="184"/>
        <end position="185"/>
    </location>
    <ligand>
        <name>ATP</name>
        <dbReference type="ChEBI" id="CHEBI:30616"/>
    </ligand>
</feature>
<feature type="binding site" evidence="1">
    <location>
        <position position="266"/>
    </location>
    <ligand>
        <name>ATP</name>
        <dbReference type="ChEBI" id="CHEBI:30616"/>
    </ligand>
</feature>
<feature type="binding site" evidence="1">
    <location>
        <position position="288"/>
    </location>
    <ligand>
        <name>ATP</name>
        <dbReference type="ChEBI" id="CHEBI:30616"/>
    </ligand>
</feature>
<feature type="binding site" evidence="1">
    <location>
        <position position="297"/>
    </location>
    <ligand>
        <name>ATP</name>
        <dbReference type="ChEBI" id="CHEBI:30616"/>
    </ligand>
</feature>
<feature type="disulfide bond" description="Redox-active" evidence="1">
    <location>
        <begin position="345"/>
        <end position="458"/>
    </location>
</feature>
<dbReference type="EC" id="2.8.1.4" evidence="1"/>
<dbReference type="EMBL" id="CP000016">
    <property type="protein sequence ID" value="AAZ40877.1"/>
    <property type="molecule type" value="Genomic_DNA"/>
</dbReference>
<dbReference type="RefSeq" id="WP_011282784.1">
    <property type="nucleotide sequence ID" value="NC_007292.1"/>
</dbReference>
<dbReference type="SMR" id="Q493G5"/>
<dbReference type="STRING" id="291272.BPEN_246"/>
<dbReference type="KEGG" id="bpn:BPEN_246"/>
<dbReference type="eggNOG" id="COG0301">
    <property type="taxonomic scope" value="Bacteria"/>
</dbReference>
<dbReference type="eggNOG" id="COG0607">
    <property type="taxonomic scope" value="Bacteria"/>
</dbReference>
<dbReference type="HOGENOM" id="CLU_037952_4_1_6"/>
<dbReference type="OrthoDB" id="9773948at2"/>
<dbReference type="UniPathway" id="UPA00060"/>
<dbReference type="Proteomes" id="UP000007794">
    <property type="component" value="Chromosome"/>
</dbReference>
<dbReference type="GO" id="GO:0005829">
    <property type="term" value="C:cytosol"/>
    <property type="evidence" value="ECO:0007669"/>
    <property type="project" value="TreeGrafter"/>
</dbReference>
<dbReference type="GO" id="GO:0005524">
    <property type="term" value="F:ATP binding"/>
    <property type="evidence" value="ECO:0007669"/>
    <property type="project" value="UniProtKB-UniRule"/>
</dbReference>
<dbReference type="GO" id="GO:0004810">
    <property type="term" value="F:CCA tRNA nucleotidyltransferase activity"/>
    <property type="evidence" value="ECO:0007669"/>
    <property type="project" value="InterPro"/>
</dbReference>
<dbReference type="GO" id="GO:0000049">
    <property type="term" value="F:tRNA binding"/>
    <property type="evidence" value="ECO:0007669"/>
    <property type="project" value="UniProtKB-UniRule"/>
</dbReference>
<dbReference type="GO" id="GO:0140741">
    <property type="term" value="F:tRNA-uracil-4 sulfurtransferase activity"/>
    <property type="evidence" value="ECO:0007669"/>
    <property type="project" value="UniProtKB-EC"/>
</dbReference>
<dbReference type="GO" id="GO:0009228">
    <property type="term" value="P:thiamine biosynthetic process"/>
    <property type="evidence" value="ECO:0007669"/>
    <property type="project" value="UniProtKB-KW"/>
</dbReference>
<dbReference type="GO" id="GO:0009229">
    <property type="term" value="P:thiamine diphosphate biosynthetic process"/>
    <property type="evidence" value="ECO:0007669"/>
    <property type="project" value="UniProtKB-UniRule"/>
</dbReference>
<dbReference type="GO" id="GO:0052837">
    <property type="term" value="P:thiazole biosynthetic process"/>
    <property type="evidence" value="ECO:0007669"/>
    <property type="project" value="InterPro"/>
</dbReference>
<dbReference type="GO" id="GO:0002937">
    <property type="term" value="P:tRNA 4-thiouridine biosynthesis"/>
    <property type="evidence" value="ECO:0007669"/>
    <property type="project" value="TreeGrafter"/>
</dbReference>
<dbReference type="CDD" id="cd01712">
    <property type="entry name" value="PPase_ThiI"/>
    <property type="match status" value="1"/>
</dbReference>
<dbReference type="CDD" id="cd00158">
    <property type="entry name" value="RHOD"/>
    <property type="match status" value="1"/>
</dbReference>
<dbReference type="CDD" id="cd11716">
    <property type="entry name" value="THUMP_ThiI"/>
    <property type="match status" value="1"/>
</dbReference>
<dbReference type="Gene3D" id="3.30.2130.30">
    <property type="match status" value="1"/>
</dbReference>
<dbReference type="Gene3D" id="3.40.50.620">
    <property type="entry name" value="HUPs"/>
    <property type="match status" value="1"/>
</dbReference>
<dbReference type="Gene3D" id="3.40.250.10">
    <property type="entry name" value="Rhodanese-like domain"/>
    <property type="match status" value="1"/>
</dbReference>
<dbReference type="HAMAP" id="MF_00021">
    <property type="entry name" value="ThiI"/>
    <property type="match status" value="1"/>
</dbReference>
<dbReference type="InterPro" id="IPR001763">
    <property type="entry name" value="Rhodanese-like_dom"/>
</dbReference>
<dbReference type="InterPro" id="IPR036873">
    <property type="entry name" value="Rhodanese-like_dom_sf"/>
</dbReference>
<dbReference type="InterPro" id="IPR014729">
    <property type="entry name" value="Rossmann-like_a/b/a_fold"/>
</dbReference>
<dbReference type="InterPro" id="IPR020536">
    <property type="entry name" value="ThiI_AANH"/>
</dbReference>
<dbReference type="InterPro" id="IPR054173">
    <property type="entry name" value="ThiI_fer"/>
</dbReference>
<dbReference type="InterPro" id="IPR049961">
    <property type="entry name" value="ThiI_N"/>
</dbReference>
<dbReference type="InterPro" id="IPR026340">
    <property type="entry name" value="THII_Thiazole_biosynth_dom"/>
</dbReference>
<dbReference type="InterPro" id="IPR004114">
    <property type="entry name" value="THUMP_dom"/>
</dbReference>
<dbReference type="InterPro" id="IPR049962">
    <property type="entry name" value="THUMP_ThiI"/>
</dbReference>
<dbReference type="InterPro" id="IPR003720">
    <property type="entry name" value="tRNA_STrfase"/>
</dbReference>
<dbReference type="InterPro" id="IPR050102">
    <property type="entry name" value="tRNA_sulfurtransferase_ThiI"/>
</dbReference>
<dbReference type="NCBIfam" id="TIGR04271">
    <property type="entry name" value="ThiI_C_thiazole"/>
    <property type="match status" value="1"/>
</dbReference>
<dbReference type="NCBIfam" id="TIGR00342">
    <property type="entry name" value="tRNA uracil 4-sulfurtransferase ThiI"/>
    <property type="match status" value="1"/>
</dbReference>
<dbReference type="PANTHER" id="PTHR43209">
    <property type="entry name" value="TRNA SULFURTRANSFERASE"/>
    <property type="match status" value="1"/>
</dbReference>
<dbReference type="PANTHER" id="PTHR43209:SF1">
    <property type="entry name" value="TRNA SULFURTRANSFERASE"/>
    <property type="match status" value="1"/>
</dbReference>
<dbReference type="Pfam" id="PF00581">
    <property type="entry name" value="Rhodanese"/>
    <property type="match status" value="1"/>
</dbReference>
<dbReference type="Pfam" id="PF02568">
    <property type="entry name" value="ThiI"/>
    <property type="match status" value="1"/>
</dbReference>
<dbReference type="Pfam" id="PF22025">
    <property type="entry name" value="ThiI_fer"/>
    <property type="match status" value="1"/>
</dbReference>
<dbReference type="Pfam" id="PF02926">
    <property type="entry name" value="THUMP"/>
    <property type="match status" value="1"/>
</dbReference>
<dbReference type="SMART" id="SM00981">
    <property type="entry name" value="THUMP"/>
    <property type="match status" value="1"/>
</dbReference>
<dbReference type="SUPFAM" id="SSF52402">
    <property type="entry name" value="Adenine nucleotide alpha hydrolases-like"/>
    <property type="match status" value="1"/>
</dbReference>
<dbReference type="SUPFAM" id="SSF52821">
    <property type="entry name" value="Rhodanese/Cell cycle control phosphatase"/>
    <property type="match status" value="1"/>
</dbReference>
<dbReference type="SUPFAM" id="SSF143437">
    <property type="entry name" value="THUMP domain-like"/>
    <property type="match status" value="1"/>
</dbReference>
<dbReference type="PROSITE" id="PS50206">
    <property type="entry name" value="RHODANESE_3"/>
    <property type="match status" value="1"/>
</dbReference>
<dbReference type="PROSITE" id="PS51165">
    <property type="entry name" value="THUMP"/>
    <property type="match status" value="1"/>
</dbReference>
<reference key="1">
    <citation type="journal article" date="2005" name="Genome Res.">
        <title>Genome sequence of Blochmannia pennsylvanicus indicates parallel evolutionary trends among bacterial mutualists of insects.</title>
        <authorList>
            <person name="Degnan P.H."/>
            <person name="Lazarus A.B."/>
            <person name="Wernegreen J.J."/>
        </authorList>
    </citation>
    <scope>NUCLEOTIDE SEQUENCE [LARGE SCALE GENOMIC DNA]</scope>
    <source>
        <strain>BPEN</strain>
    </source>
</reference>
<proteinExistence type="inferred from homology"/>
<sequence>MKIVIKLSPEITIKSRAIRIFFIKILITNIKTILKKNNESASIIRNWDYLEVICNHSKYQKICAMLINIPGIHHLLLIKKHMFRSLQDIYEKIILSLNYEIQLSGKSFCVRVKRCGKHNFTSQEVEHYLGNKLCQNIGNIRVNLTKPEKTIYLEIKDNQLFIIIKRYEGLGGFPIGTQQEMLSLISGGFDSAVASYMLIRRGCKVNYCFFNLGGDMHTVEVCRVIYFLWNKFSSSHKIKFISIDFSEVIKEITAKIKDNQIGVVLKRMMIRSASLVANRYKITALITGEVLGQVSSQTLSNLTLIDSVSDHVIFRPLIAYDKEKIIDLARKIGTEILSKSVPEYCGIISKKSTAKTTKQLIEFEENNFDFTVLNRAVSQSYVIDVQNIPDQIINQHVFQVETKKILDSTDVVLDIRTEIEQEKNPLYLNNIEIKKIPFYNLIDQFSKLDPNKIYLLYCDHGIMSRLQVMYLHRQGFSNVKIYRPPR</sequence>